<gene>
    <name evidence="1" type="primary">miaA</name>
    <name type="ordered locus">RHECIAT_CH0002936</name>
</gene>
<feature type="chain" id="PRO_0000377280" description="tRNA dimethylallyltransferase">
    <location>
        <begin position="1"/>
        <end position="297"/>
    </location>
</feature>
<feature type="region of interest" description="Interaction with substrate tRNA" evidence="1">
    <location>
        <begin position="40"/>
        <end position="43"/>
    </location>
</feature>
<feature type="region of interest" description="Interaction with substrate tRNA" evidence="1">
    <location>
        <begin position="164"/>
        <end position="168"/>
    </location>
</feature>
<feature type="binding site" evidence="1">
    <location>
        <begin position="15"/>
        <end position="22"/>
    </location>
    <ligand>
        <name>ATP</name>
        <dbReference type="ChEBI" id="CHEBI:30616"/>
    </ligand>
</feature>
<feature type="binding site" evidence="1">
    <location>
        <begin position="17"/>
        <end position="22"/>
    </location>
    <ligand>
        <name>substrate</name>
    </ligand>
</feature>
<feature type="site" description="Interaction with substrate tRNA" evidence="1">
    <location>
        <position position="106"/>
    </location>
</feature>
<feature type="site" description="Interaction with substrate tRNA" evidence="1">
    <location>
        <position position="128"/>
    </location>
</feature>
<comment type="function">
    <text evidence="1">Catalyzes the transfer of a dimethylallyl group onto the adenine at position 37 in tRNAs that read codons beginning with uridine, leading to the formation of N6-(dimethylallyl)adenosine (i(6)A).</text>
</comment>
<comment type="catalytic activity">
    <reaction evidence="1">
        <text>adenosine(37) in tRNA + dimethylallyl diphosphate = N(6)-dimethylallyladenosine(37) in tRNA + diphosphate</text>
        <dbReference type="Rhea" id="RHEA:26482"/>
        <dbReference type="Rhea" id="RHEA-COMP:10162"/>
        <dbReference type="Rhea" id="RHEA-COMP:10375"/>
        <dbReference type="ChEBI" id="CHEBI:33019"/>
        <dbReference type="ChEBI" id="CHEBI:57623"/>
        <dbReference type="ChEBI" id="CHEBI:74411"/>
        <dbReference type="ChEBI" id="CHEBI:74415"/>
        <dbReference type="EC" id="2.5.1.75"/>
    </reaction>
</comment>
<comment type="cofactor">
    <cofactor evidence="1">
        <name>Mg(2+)</name>
        <dbReference type="ChEBI" id="CHEBI:18420"/>
    </cofactor>
</comment>
<comment type="subunit">
    <text evidence="1">Monomer.</text>
</comment>
<comment type="similarity">
    <text evidence="1">Belongs to the IPP transferase family.</text>
</comment>
<name>MIAA_RHIE6</name>
<organism>
    <name type="scientific">Rhizobium etli (strain CIAT 652)</name>
    <dbReference type="NCBI Taxonomy" id="491916"/>
    <lineage>
        <taxon>Bacteria</taxon>
        <taxon>Pseudomonadati</taxon>
        <taxon>Pseudomonadota</taxon>
        <taxon>Alphaproteobacteria</taxon>
        <taxon>Hyphomicrobiales</taxon>
        <taxon>Rhizobiaceae</taxon>
        <taxon>Rhizobium/Agrobacterium group</taxon>
        <taxon>Rhizobium</taxon>
    </lineage>
</organism>
<protein>
    <recommendedName>
        <fullName evidence="1">tRNA dimethylallyltransferase</fullName>
        <ecNumber evidence="1">2.5.1.75</ecNumber>
    </recommendedName>
    <alternativeName>
        <fullName evidence="1">Dimethylallyl diphosphate:tRNA dimethylallyltransferase</fullName>
        <shortName evidence="1">DMAPP:tRNA dimethylallyltransferase</shortName>
        <shortName evidence="1">DMATase</shortName>
    </alternativeName>
    <alternativeName>
        <fullName evidence="1">Isopentenyl-diphosphate:tRNA isopentenyltransferase</fullName>
        <shortName evidence="1">IPP transferase</shortName>
        <shortName evidence="1">IPPT</shortName>
        <shortName evidence="1">IPTase</shortName>
    </alternativeName>
</protein>
<sequence>MENLLSVENAILITGPTASGKSALAVELAKRYGGAVVNADSMQVYDTLRVLTARPSEEEMQGVPHHLYGHVPAGAAYSTGAWLRDVSALLPALKAAGQLPVFVGGTGLYFKALTGGLSDMPEIPEGLREELRMRLVAEGPEGLHAELEAIDPAMSASLNRQDGQRIVRALEVIKATGRSIAEFHRRLGPVLIDADEARKIVVLPDRAVLHARINGRFEKMLQQGAESEVRALLALGLPAVAPVMKAIGVSQITAMLKGEMTREEVLEKGAAATRQYAKRQMTWFRNQMDESWERLAP</sequence>
<evidence type="ECO:0000255" key="1">
    <source>
        <dbReference type="HAMAP-Rule" id="MF_00185"/>
    </source>
</evidence>
<keyword id="KW-0067">ATP-binding</keyword>
<keyword id="KW-0460">Magnesium</keyword>
<keyword id="KW-0547">Nucleotide-binding</keyword>
<keyword id="KW-0808">Transferase</keyword>
<keyword id="KW-0819">tRNA processing</keyword>
<dbReference type="EC" id="2.5.1.75" evidence="1"/>
<dbReference type="EMBL" id="CP001074">
    <property type="protein sequence ID" value="ACE91885.1"/>
    <property type="molecule type" value="Genomic_DNA"/>
</dbReference>
<dbReference type="SMR" id="B3PTP8"/>
<dbReference type="KEGG" id="rec:RHECIAT_CH0002936"/>
<dbReference type="eggNOG" id="COG0324">
    <property type="taxonomic scope" value="Bacteria"/>
</dbReference>
<dbReference type="HOGENOM" id="CLU_032616_0_1_5"/>
<dbReference type="Proteomes" id="UP000008817">
    <property type="component" value="Chromosome"/>
</dbReference>
<dbReference type="GO" id="GO:0005524">
    <property type="term" value="F:ATP binding"/>
    <property type="evidence" value="ECO:0007669"/>
    <property type="project" value="UniProtKB-UniRule"/>
</dbReference>
<dbReference type="GO" id="GO:0052381">
    <property type="term" value="F:tRNA dimethylallyltransferase activity"/>
    <property type="evidence" value="ECO:0007669"/>
    <property type="project" value="UniProtKB-UniRule"/>
</dbReference>
<dbReference type="GO" id="GO:0006400">
    <property type="term" value="P:tRNA modification"/>
    <property type="evidence" value="ECO:0007669"/>
    <property type="project" value="TreeGrafter"/>
</dbReference>
<dbReference type="Gene3D" id="1.10.20.140">
    <property type="match status" value="1"/>
</dbReference>
<dbReference type="Gene3D" id="1.10.287.890">
    <property type="entry name" value="Crystal structure of tRNA isopentenylpyrophosphate transferase (bh2366) domain"/>
    <property type="match status" value="1"/>
</dbReference>
<dbReference type="Gene3D" id="3.40.50.300">
    <property type="entry name" value="P-loop containing nucleotide triphosphate hydrolases"/>
    <property type="match status" value="1"/>
</dbReference>
<dbReference type="HAMAP" id="MF_00185">
    <property type="entry name" value="IPP_trans"/>
    <property type="match status" value="1"/>
</dbReference>
<dbReference type="InterPro" id="IPR039657">
    <property type="entry name" value="Dimethylallyltransferase"/>
</dbReference>
<dbReference type="InterPro" id="IPR018022">
    <property type="entry name" value="IPT"/>
</dbReference>
<dbReference type="InterPro" id="IPR027417">
    <property type="entry name" value="P-loop_NTPase"/>
</dbReference>
<dbReference type="NCBIfam" id="TIGR00174">
    <property type="entry name" value="miaA"/>
    <property type="match status" value="1"/>
</dbReference>
<dbReference type="PANTHER" id="PTHR11088">
    <property type="entry name" value="TRNA DIMETHYLALLYLTRANSFERASE"/>
    <property type="match status" value="1"/>
</dbReference>
<dbReference type="PANTHER" id="PTHR11088:SF60">
    <property type="entry name" value="TRNA DIMETHYLALLYLTRANSFERASE"/>
    <property type="match status" value="1"/>
</dbReference>
<dbReference type="Pfam" id="PF01715">
    <property type="entry name" value="IPPT"/>
    <property type="match status" value="1"/>
</dbReference>
<dbReference type="SUPFAM" id="SSF52540">
    <property type="entry name" value="P-loop containing nucleoside triphosphate hydrolases"/>
    <property type="match status" value="2"/>
</dbReference>
<accession>B3PTP8</accession>
<reference key="1">
    <citation type="journal article" date="2010" name="Appl. Environ. Microbiol.">
        <title>Conserved symbiotic plasmid DNA sequences in the multireplicon pangenomic structure of Rhizobium etli.</title>
        <authorList>
            <person name="Gonzalez V."/>
            <person name="Acosta J.L."/>
            <person name="Santamaria R.I."/>
            <person name="Bustos P."/>
            <person name="Fernandez J.L."/>
            <person name="Hernandez Gonzalez I.L."/>
            <person name="Diaz R."/>
            <person name="Flores M."/>
            <person name="Palacios R."/>
            <person name="Mora J."/>
            <person name="Davila G."/>
        </authorList>
    </citation>
    <scope>NUCLEOTIDE SEQUENCE [LARGE SCALE GENOMIC DNA]</scope>
    <source>
        <strain>CIAT 652</strain>
    </source>
</reference>
<proteinExistence type="inferred from homology"/>